<organism>
    <name type="scientific">Alkalilimnicola ehrlichii (strain ATCC BAA-1101 / DSM 17681 / MLHE-1)</name>
    <dbReference type="NCBI Taxonomy" id="187272"/>
    <lineage>
        <taxon>Bacteria</taxon>
        <taxon>Pseudomonadati</taxon>
        <taxon>Pseudomonadota</taxon>
        <taxon>Gammaproteobacteria</taxon>
        <taxon>Chromatiales</taxon>
        <taxon>Ectothiorhodospiraceae</taxon>
        <taxon>Alkalilimnicola</taxon>
    </lineage>
</organism>
<proteinExistence type="inferred from homology"/>
<reference key="1">
    <citation type="submission" date="2006-08" db="EMBL/GenBank/DDBJ databases">
        <title>Complete sequence of Alkalilimnicola ehrilichei MLHE-1.</title>
        <authorList>
            <person name="Copeland A."/>
            <person name="Lucas S."/>
            <person name="Lapidus A."/>
            <person name="Barry K."/>
            <person name="Detter J.C."/>
            <person name="Glavina del Rio T."/>
            <person name="Hammon N."/>
            <person name="Israni S."/>
            <person name="Dalin E."/>
            <person name="Tice H."/>
            <person name="Pitluck S."/>
            <person name="Sims D."/>
            <person name="Brettin T."/>
            <person name="Bruce D."/>
            <person name="Han C."/>
            <person name="Tapia R."/>
            <person name="Gilna P."/>
            <person name="Schmutz J."/>
            <person name="Larimer F."/>
            <person name="Land M."/>
            <person name="Hauser L."/>
            <person name="Kyrpides N."/>
            <person name="Mikhailova N."/>
            <person name="Oremland R.S."/>
            <person name="Hoeft S.E."/>
            <person name="Switzer-Blum J."/>
            <person name="Kulp T."/>
            <person name="King G."/>
            <person name="Tabita R."/>
            <person name="Witte B."/>
            <person name="Santini J.M."/>
            <person name="Basu P."/>
            <person name="Hollibaugh J.T."/>
            <person name="Xie G."/>
            <person name="Stolz J.F."/>
            <person name="Richardson P."/>
        </authorList>
    </citation>
    <scope>NUCLEOTIDE SEQUENCE [LARGE SCALE GENOMIC DNA]</scope>
    <source>
        <strain>ATCC BAA-1101 / DSM 17681 / MLHE-1</strain>
    </source>
</reference>
<evidence type="ECO:0000255" key="1">
    <source>
        <dbReference type="HAMAP-Rule" id="MF_01183"/>
    </source>
</evidence>
<gene>
    <name evidence="1" type="primary">surA</name>
    <name type="ordered locus">Mlg_0200</name>
</gene>
<name>SURA_ALKEH</name>
<accession>Q0AC82</accession>
<feature type="signal peptide" evidence="1">
    <location>
        <begin position="1"/>
        <end position="28"/>
    </location>
</feature>
<feature type="chain" id="PRO_5000132642" description="Chaperone SurA">
    <location>
        <begin position="29"/>
        <end position="433"/>
    </location>
</feature>
<feature type="domain" description="PpiC 1" evidence="1">
    <location>
        <begin position="174"/>
        <end position="277"/>
    </location>
</feature>
<feature type="domain" description="PpiC 2" evidence="1">
    <location>
        <begin position="286"/>
        <end position="386"/>
    </location>
</feature>
<comment type="function">
    <text evidence="1">Chaperone involved in the correct folding and assembly of outer membrane proteins. Recognizes specific patterns of aromatic residues and the orientation of their side chains, which are found more frequently in integral outer membrane proteins. May act in both early periplasmic and late outer membrane-associated steps of protein maturation.</text>
</comment>
<comment type="catalytic activity">
    <reaction evidence="1">
        <text>[protein]-peptidylproline (omega=180) = [protein]-peptidylproline (omega=0)</text>
        <dbReference type="Rhea" id="RHEA:16237"/>
        <dbReference type="Rhea" id="RHEA-COMP:10747"/>
        <dbReference type="Rhea" id="RHEA-COMP:10748"/>
        <dbReference type="ChEBI" id="CHEBI:83833"/>
        <dbReference type="ChEBI" id="CHEBI:83834"/>
        <dbReference type="EC" id="5.2.1.8"/>
    </reaction>
</comment>
<comment type="subcellular location">
    <subcellularLocation>
        <location evidence="1">Periplasm</location>
    </subcellularLocation>
    <text evidence="1">Is capable of associating with the outer membrane.</text>
</comment>
<comment type="domain">
    <text evidence="1">The PPIase activity resides only in the second parvulin domain. The N-terminal region and the C-terminal tail are necessary and sufficient for the chaperone activity of SurA. The PPIase activity is dispensable for SurA to function as a chaperone. The N-terminal region and the C-terminal tail are also required for porin recognition.</text>
</comment>
<sequence length="433" mass="48588">MTAITRITLTGALLAAALLLAALQPARAETLDRIVAVVDDQVVLASELERELATIANQLRSRGQRLPPRDVFQRQVLERLITQRVQLSRAQRVGITVDDATLDAAMQRMARQNNMTLGQFRQAVEQEGFEYNYFREGIREEIAISRLRQAQVEEQVTVTPQEVEEVLETLDDENQEYRLGHILVATPEAASTAQLEEARERIEQLREQIIAGETDFEGAATAFSDAASAMEGGDLGWRLHSQLPSLFAEAIDEGLQAGEVSGVLQNSSGFHLVKLMDQRTQGGERVTETRARHILIRTDGDVITDEDARLRLRSLLERIEAGESFAELAEAYSEDPGSAARGGDLGWTQPGQLVPEFQGAMDALEEGQISAPFASPFGWHIVQVTDRRERDVSRERLRDQLAQQIHQRKVEEAFEQWIRRLRDEAYVDVRVEL</sequence>
<protein>
    <recommendedName>
        <fullName evidence="1">Chaperone SurA</fullName>
    </recommendedName>
    <alternativeName>
        <fullName evidence="1">Peptidyl-prolyl cis-trans isomerase SurA</fullName>
        <shortName evidence="1">PPIase SurA</shortName>
        <ecNumber evidence="1">5.2.1.8</ecNumber>
    </alternativeName>
    <alternativeName>
        <fullName evidence="1">Rotamase SurA</fullName>
    </alternativeName>
</protein>
<dbReference type="EC" id="5.2.1.8" evidence="1"/>
<dbReference type="EMBL" id="CP000453">
    <property type="protein sequence ID" value="ABI55555.1"/>
    <property type="molecule type" value="Genomic_DNA"/>
</dbReference>
<dbReference type="RefSeq" id="WP_011627951.1">
    <property type="nucleotide sequence ID" value="NC_008340.1"/>
</dbReference>
<dbReference type="SMR" id="Q0AC82"/>
<dbReference type="KEGG" id="aeh:Mlg_0200"/>
<dbReference type="eggNOG" id="COG0760">
    <property type="taxonomic scope" value="Bacteria"/>
</dbReference>
<dbReference type="HOGENOM" id="CLU_034646_11_0_6"/>
<dbReference type="OrthoDB" id="14196at2"/>
<dbReference type="Proteomes" id="UP000001962">
    <property type="component" value="Chromosome"/>
</dbReference>
<dbReference type="GO" id="GO:0030288">
    <property type="term" value="C:outer membrane-bounded periplasmic space"/>
    <property type="evidence" value="ECO:0007669"/>
    <property type="project" value="InterPro"/>
</dbReference>
<dbReference type="GO" id="GO:0042277">
    <property type="term" value="F:peptide binding"/>
    <property type="evidence" value="ECO:0007669"/>
    <property type="project" value="InterPro"/>
</dbReference>
<dbReference type="GO" id="GO:0003755">
    <property type="term" value="F:peptidyl-prolyl cis-trans isomerase activity"/>
    <property type="evidence" value="ECO:0007669"/>
    <property type="project" value="UniProtKB-UniRule"/>
</dbReference>
<dbReference type="GO" id="GO:0051082">
    <property type="term" value="F:unfolded protein binding"/>
    <property type="evidence" value="ECO:0007669"/>
    <property type="project" value="UniProtKB-UniRule"/>
</dbReference>
<dbReference type="GO" id="GO:0043165">
    <property type="term" value="P:Gram-negative-bacterium-type cell outer membrane assembly"/>
    <property type="evidence" value="ECO:0007669"/>
    <property type="project" value="InterPro"/>
</dbReference>
<dbReference type="GO" id="GO:0006457">
    <property type="term" value="P:protein folding"/>
    <property type="evidence" value="ECO:0007669"/>
    <property type="project" value="UniProtKB-UniRule"/>
</dbReference>
<dbReference type="GO" id="GO:0050821">
    <property type="term" value="P:protein stabilization"/>
    <property type="evidence" value="ECO:0007669"/>
    <property type="project" value="InterPro"/>
</dbReference>
<dbReference type="Gene3D" id="3.10.50.40">
    <property type="match status" value="2"/>
</dbReference>
<dbReference type="Gene3D" id="1.10.4030.10">
    <property type="entry name" value="Porin chaperone SurA, peptide-binding domain"/>
    <property type="match status" value="1"/>
</dbReference>
<dbReference type="HAMAP" id="MF_01183">
    <property type="entry name" value="Chaperone_SurA"/>
    <property type="match status" value="1"/>
</dbReference>
<dbReference type="InterPro" id="IPR050280">
    <property type="entry name" value="OMP_Chaperone_SurA"/>
</dbReference>
<dbReference type="InterPro" id="IPR046357">
    <property type="entry name" value="PPIase_dom_sf"/>
</dbReference>
<dbReference type="InterPro" id="IPR000297">
    <property type="entry name" value="PPIase_PpiC"/>
</dbReference>
<dbReference type="InterPro" id="IPR023058">
    <property type="entry name" value="PPIase_PpiC_CS"/>
</dbReference>
<dbReference type="InterPro" id="IPR023034">
    <property type="entry name" value="PPIase_SurA"/>
</dbReference>
<dbReference type="InterPro" id="IPR015391">
    <property type="entry name" value="SurA_N"/>
</dbReference>
<dbReference type="InterPro" id="IPR027304">
    <property type="entry name" value="Trigger_fact/SurA_dom_sf"/>
</dbReference>
<dbReference type="PANTHER" id="PTHR47637">
    <property type="entry name" value="CHAPERONE SURA"/>
    <property type="match status" value="1"/>
</dbReference>
<dbReference type="PANTHER" id="PTHR47637:SF1">
    <property type="entry name" value="CHAPERONE SURA"/>
    <property type="match status" value="1"/>
</dbReference>
<dbReference type="Pfam" id="PF00639">
    <property type="entry name" value="Rotamase"/>
    <property type="match status" value="1"/>
</dbReference>
<dbReference type="Pfam" id="PF13616">
    <property type="entry name" value="Rotamase_3"/>
    <property type="match status" value="1"/>
</dbReference>
<dbReference type="Pfam" id="PF09312">
    <property type="entry name" value="SurA_N"/>
    <property type="match status" value="1"/>
</dbReference>
<dbReference type="SUPFAM" id="SSF54534">
    <property type="entry name" value="FKBP-like"/>
    <property type="match status" value="2"/>
</dbReference>
<dbReference type="SUPFAM" id="SSF109998">
    <property type="entry name" value="Triger factor/SurA peptide-binding domain-like"/>
    <property type="match status" value="1"/>
</dbReference>
<dbReference type="PROSITE" id="PS01096">
    <property type="entry name" value="PPIC_PPIASE_1"/>
    <property type="match status" value="2"/>
</dbReference>
<dbReference type="PROSITE" id="PS50198">
    <property type="entry name" value="PPIC_PPIASE_2"/>
    <property type="match status" value="2"/>
</dbReference>
<keyword id="KW-0143">Chaperone</keyword>
<keyword id="KW-0413">Isomerase</keyword>
<keyword id="KW-0574">Periplasm</keyword>
<keyword id="KW-1185">Reference proteome</keyword>
<keyword id="KW-0677">Repeat</keyword>
<keyword id="KW-0697">Rotamase</keyword>
<keyword id="KW-0732">Signal</keyword>